<accession>B1ZT05</accession>
<name>PYRB_OPITP</name>
<organism>
    <name type="scientific">Opitutus terrae (strain DSM 11246 / JCM 15787 / PB90-1)</name>
    <dbReference type="NCBI Taxonomy" id="452637"/>
    <lineage>
        <taxon>Bacteria</taxon>
        <taxon>Pseudomonadati</taxon>
        <taxon>Verrucomicrobiota</taxon>
        <taxon>Opitutia</taxon>
        <taxon>Opitutales</taxon>
        <taxon>Opitutaceae</taxon>
        <taxon>Opitutus</taxon>
    </lineage>
</organism>
<protein>
    <recommendedName>
        <fullName evidence="1">Aspartate carbamoyltransferase catalytic subunit</fullName>
        <ecNumber evidence="1">2.1.3.2</ecNumber>
    </recommendedName>
    <alternativeName>
        <fullName evidence="1">Aspartate transcarbamylase</fullName>
        <shortName evidence="1">ATCase</shortName>
    </alternativeName>
</protein>
<feature type="chain" id="PRO_1000191912" description="Aspartate carbamoyltransferase catalytic subunit">
    <location>
        <begin position="1"/>
        <end position="314"/>
    </location>
</feature>
<feature type="binding site" evidence="1">
    <location>
        <position position="58"/>
    </location>
    <ligand>
        <name>carbamoyl phosphate</name>
        <dbReference type="ChEBI" id="CHEBI:58228"/>
    </ligand>
</feature>
<feature type="binding site" evidence="1">
    <location>
        <position position="59"/>
    </location>
    <ligand>
        <name>carbamoyl phosphate</name>
        <dbReference type="ChEBI" id="CHEBI:58228"/>
    </ligand>
</feature>
<feature type="binding site" evidence="1">
    <location>
        <position position="86"/>
    </location>
    <ligand>
        <name>L-aspartate</name>
        <dbReference type="ChEBI" id="CHEBI:29991"/>
    </ligand>
</feature>
<feature type="binding site" evidence="1">
    <location>
        <position position="108"/>
    </location>
    <ligand>
        <name>carbamoyl phosphate</name>
        <dbReference type="ChEBI" id="CHEBI:58228"/>
    </ligand>
</feature>
<feature type="binding site" evidence="1">
    <location>
        <position position="136"/>
    </location>
    <ligand>
        <name>carbamoyl phosphate</name>
        <dbReference type="ChEBI" id="CHEBI:58228"/>
    </ligand>
</feature>
<feature type="binding site" evidence="1">
    <location>
        <position position="139"/>
    </location>
    <ligand>
        <name>carbamoyl phosphate</name>
        <dbReference type="ChEBI" id="CHEBI:58228"/>
    </ligand>
</feature>
<feature type="binding site" evidence="1">
    <location>
        <position position="169"/>
    </location>
    <ligand>
        <name>L-aspartate</name>
        <dbReference type="ChEBI" id="CHEBI:29991"/>
    </ligand>
</feature>
<feature type="binding site" evidence="1">
    <location>
        <position position="223"/>
    </location>
    <ligand>
        <name>L-aspartate</name>
        <dbReference type="ChEBI" id="CHEBI:29991"/>
    </ligand>
</feature>
<feature type="binding site" evidence="1">
    <location>
        <position position="264"/>
    </location>
    <ligand>
        <name>carbamoyl phosphate</name>
        <dbReference type="ChEBI" id="CHEBI:58228"/>
    </ligand>
</feature>
<feature type="binding site" evidence="1">
    <location>
        <position position="265"/>
    </location>
    <ligand>
        <name>carbamoyl phosphate</name>
        <dbReference type="ChEBI" id="CHEBI:58228"/>
    </ligand>
</feature>
<gene>
    <name evidence="1" type="primary">pyrB</name>
    <name type="ordered locus">Oter_2512</name>
</gene>
<comment type="function">
    <text evidence="1">Catalyzes the condensation of carbamoyl phosphate and aspartate to form carbamoyl aspartate and inorganic phosphate, the committed step in the de novo pyrimidine nucleotide biosynthesis pathway.</text>
</comment>
<comment type="catalytic activity">
    <reaction evidence="1">
        <text>carbamoyl phosphate + L-aspartate = N-carbamoyl-L-aspartate + phosphate + H(+)</text>
        <dbReference type="Rhea" id="RHEA:20013"/>
        <dbReference type="ChEBI" id="CHEBI:15378"/>
        <dbReference type="ChEBI" id="CHEBI:29991"/>
        <dbReference type="ChEBI" id="CHEBI:32814"/>
        <dbReference type="ChEBI" id="CHEBI:43474"/>
        <dbReference type="ChEBI" id="CHEBI:58228"/>
        <dbReference type="EC" id="2.1.3.2"/>
    </reaction>
</comment>
<comment type="pathway">
    <text evidence="1">Pyrimidine metabolism; UMP biosynthesis via de novo pathway; (S)-dihydroorotate from bicarbonate: step 2/3.</text>
</comment>
<comment type="subunit">
    <text evidence="1">Heterododecamer (2C3:3R2) of six catalytic PyrB chains organized as two trimers (C3), and six regulatory PyrI chains organized as three dimers (R2).</text>
</comment>
<comment type="similarity">
    <text evidence="1">Belongs to the aspartate/ornithine carbamoyltransferase superfamily. ATCase family.</text>
</comment>
<dbReference type="EC" id="2.1.3.2" evidence="1"/>
<dbReference type="EMBL" id="CP001032">
    <property type="protein sequence ID" value="ACB75794.1"/>
    <property type="molecule type" value="Genomic_DNA"/>
</dbReference>
<dbReference type="RefSeq" id="WP_012375329.1">
    <property type="nucleotide sequence ID" value="NC_010571.1"/>
</dbReference>
<dbReference type="SMR" id="B1ZT05"/>
<dbReference type="STRING" id="452637.Oter_2512"/>
<dbReference type="KEGG" id="ote:Oter_2512"/>
<dbReference type="eggNOG" id="COG0540">
    <property type="taxonomic scope" value="Bacteria"/>
</dbReference>
<dbReference type="HOGENOM" id="CLU_043846_2_0_0"/>
<dbReference type="OrthoDB" id="9802587at2"/>
<dbReference type="UniPathway" id="UPA00070">
    <property type="reaction ID" value="UER00116"/>
</dbReference>
<dbReference type="Proteomes" id="UP000007013">
    <property type="component" value="Chromosome"/>
</dbReference>
<dbReference type="GO" id="GO:0005829">
    <property type="term" value="C:cytosol"/>
    <property type="evidence" value="ECO:0007669"/>
    <property type="project" value="TreeGrafter"/>
</dbReference>
<dbReference type="GO" id="GO:0016597">
    <property type="term" value="F:amino acid binding"/>
    <property type="evidence" value="ECO:0007669"/>
    <property type="project" value="InterPro"/>
</dbReference>
<dbReference type="GO" id="GO:0004070">
    <property type="term" value="F:aspartate carbamoyltransferase activity"/>
    <property type="evidence" value="ECO:0007669"/>
    <property type="project" value="UniProtKB-UniRule"/>
</dbReference>
<dbReference type="GO" id="GO:0006207">
    <property type="term" value="P:'de novo' pyrimidine nucleobase biosynthetic process"/>
    <property type="evidence" value="ECO:0007669"/>
    <property type="project" value="InterPro"/>
</dbReference>
<dbReference type="GO" id="GO:0044205">
    <property type="term" value="P:'de novo' UMP biosynthetic process"/>
    <property type="evidence" value="ECO:0007669"/>
    <property type="project" value="UniProtKB-UniRule"/>
</dbReference>
<dbReference type="GO" id="GO:0006520">
    <property type="term" value="P:amino acid metabolic process"/>
    <property type="evidence" value="ECO:0007669"/>
    <property type="project" value="InterPro"/>
</dbReference>
<dbReference type="FunFam" id="3.40.50.1370:FF:000007">
    <property type="entry name" value="Aspartate carbamoyltransferase"/>
    <property type="match status" value="1"/>
</dbReference>
<dbReference type="Gene3D" id="3.40.50.1370">
    <property type="entry name" value="Aspartate/ornithine carbamoyltransferase"/>
    <property type="match status" value="2"/>
</dbReference>
<dbReference type="HAMAP" id="MF_00001">
    <property type="entry name" value="Asp_carb_tr"/>
    <property type="match status" value="1"/>
</dbReference>
<dbReference type="InterPro" id="IPR006132">
    <property type="entry name" value="Asp/Orn_carbamoyltranf_P-bd"/>
</dbReference>
<dbReference type="InterPro" id="IPR006130">
    <property type="entry name" value="Asp/Orn_carbamoylTrfase"/>
</dbReference>
<dbReference type="InterPro" id="IPR036901">
    <property type="entry name" value="Asp/Orn_carbamoylTrfase_sf"/>
</dbReference>
<dbReference type="InterPro" id="IPR002082">
    <property type="entry name" value="Asp_carbamoyltransf"/>
</dbReference>
<dbReference type="InterPro" id="IPR006131">
    <property type="entry name" value="Asp_carbamoyltransf_Asp/Orn-bd"/>
</dbReference>
<dbReference type="NCBIfam" id="TIGR00670">
    <property type="entry name" value="asp_carb_tr"/>
    <property type="match status" value="1"/>
</dbReference>
<dbReference type="NCBIfam" id="NF002032">
    <property type="entry name" value="PRK00856.1"/>
    <property type="match status" value="1"/>
</dbReference>
<dbReference type="PANTHER" id="PTHR45753:SF6">
    <property type="entry name" value="ASPARTATE CARBAMOYLTRANSFERASE"/>
    <property type="match status" value="1"/>
</dbReference>
<dbReference type="PANTHER" id="PTHR45753">
    <property type="entry name" value="ORNITHINE CARBAMOYLTRANSFERASE, MITOCHONDRIAL"/>
    <property type="match status" value="1"/>
</dbReference>
<dbReference type="Pfam" id="PF00185">
    <property type="entry name" value="OTCace"/>
    <property type="match status" value="1"/>
</dbReference>
<dbReference type="Pfam" id="PF02729">
    <property type="entry name" value="OTCace_N"/>
    <property type="match status" value="1"/>
</dbReference>
<dbReference type="PRINTS" id="PR00100">
    <property type="entry name" value="AOTCASE"/>
</dbReference>
<dbReference type="PRINTS" id="PR00101">
    <property type="entry name" value="ATCASE"/>
</dbReference>
<dbReference type="SUPFAM" id="SSF53671">
    <property type="entry name" value="Aspartate/ornithine carbamoyltransferase"/>
    <property type="match status" value="1"/>
</dbReference>
<dbReference type="PROSITE" id="PS00097">
    <property type="entry name" value="CARBAMOYLTRANSFERASE"/>
    <property type="match status" value="1"/>
</dbReference>
<proteinExistence type="inferred from homology"/>
<keyword id="KW-0665">Pyrimidine biosynthesis</keyword>
<keyword id="KW-1185">Reference proteome</keyword>
<keyword id="KW-0808">Transferase</keyword>
<evidence type="ECO:0000255" key="1">
    <source>
        <dbReference type="HAMAP-Rule" id="MF_00001"/>
    </source>
</evidence>
<sequence>MPWTRRHLLTLEELSREEIDQIHATAAAFKRTLSRRVKKVPALRGKTIVNLFLEPSTRTRMAFDMAAKRLSADVISFDAASSSTTKGETLHDTAKNIQALGADMIVIRHAAAGSPLYLSRILDIPVINAGDGAHEHPTQGLLDTFTMKEHLGSLKGRKIVILGDILFSRVARSNIHALTKLGANVTLVGPATLVPHWFTDLGVEVSHDLRTALADAEVVMLLRIQHERQSSGHFPSLGEYTSMFGLNKTRASWLNPKAIIMHPGPINRGVEIDSDLADGDHSVILEQVNNGIAVRMAALYLCAGGQPENVAPIE</sequence>
<reference key="1">
    <citation type="journal article" date="2011" name="J. Bacteriol.">
        <title>Genome sequence of the verrucomicrobium Opitutus terrae PB90-1, an abundant inhabitant of rice paddy soil ecosystems.</title>
        <authorList>
            <person name="van Passel M.W."/>
            <person name="Kant R."/>
            <person name="Palva A."/>
            <person name="Copeland A."/>
            <person name="Lucas S."/>
            <person name="Lapidus A."/>
            <person name="Glavina del Rio T."/>
            <person name="Pitluck S."/>
            <person name="Goltsman E."/>
            <person name="Clum A."/>
            <person name="Sun H."/>
            <person name="Schmutz J."/>
            <person name="Larimer F.W."/>
            <person name="Land M.L."/>
            <person name="Hauser L."/>
            <person name="Kyrpides N."/>
            <person name="Mikhailova N."/>
            <person name="Richardson P.P."/>
            <person name="Janssen P.H."/>
            <person name="de Vos W.M."/>
            <person name="Smidt H."/>
        </authorList>
    </citation>
    <scope>NUCLEOTIDE SEQUENCE [LARGE SCALE GENOMIC DNA]</scope>
    <source>
        <strain>DSM 11246 / JCM 15787 / PB90-1</strain>
    </source>
</reference>